<organism>
    <name type="scientific">Arabidopsis thaliana</name>
    <name type="common">Mouse-ear cress</name>
    <dbReference type="NCBI Taxonomy" id="3702"/>
    <lineage>
        <taxon>Eukaryota</taxon>
        <taxon>Viridiplantae</taxon>
        <taxon>Streptophyta</taxon>
        <taxon>Embryophyta</taxon>
        <taxon>Tracheophyta</taxon>
        <taxon>Spermatophyta</taxon>
        <taxon>Magnoliopsida</taxon>
        <taxon>eudicotyledons</taxon>
        <taxon>Gunneridae</taxon>
        <taxon>Pentapetalae</taxon>
        <taxon>rosids</taxon>
        <taxon>malvids</taxon>
        <taxon>Brassicales</taxon>
        <taxon>Brassicaceae</taxon>
        <taxon>Camelineae</taxon>
        <taxon>Arabidopsis</taxon>
    </lineage>
</organism>
<dbReference type="EMBL" id="AF128396">
    <property type="protein sequence ID" value="AAD17368.1"/>
    <property type="status" value="ALT_SEQ"/>
    <property type="molecule type" value="Genomic_DNA"/>
</dbReference>
<dbReference type="EMBL" id="AL161513">
    <property type="protein sequence ID" value="CAB78017.1"/>
    <property type="status" value="ALT_SEQ"/>
    <property type="molecule type" value="Genomic_DNA"/>
</dbReference>
<dbReference type="EMBL" id="CP002687">
    <property type="protein sequence ID" value="AEE82697.1"/>
    <property type="molecule type" value="Genomic_DNA"/>
</dbReference>
<dbReference type="EMBL" id="BX826634">
    <property type="status" value="NOT_ANNOTATED_CDS"/>
    <property type="molecule type" value="mRNA"/>
</dbReference>
<dbReference type="EMBL" id="AK227730">
    <property type="protein sequence ID" value="BAE99715.1"/>
    <property type="status" value="ALT_SEQ"/>
    <property type="molecule type" value="mRNA"/>
</dbReference>
<dbReference type="PIR" id="A85090">
    <property type="entry name" value="A85090"/>
</dbReference>
<dbReference type="RefSeq" id="NP_192632.2">
    <property type="nucleotide sequence ID" value="NM_116962.4"/>
</dbReference>
<dbReference type="SMR" id="Q9ZPE9"/>
<dbReference type="FunCoup" id="Q9ZPE9">
    <property type="interactions" value="47"/>
</dbReference>
<dbReference type="GlyCosmos" id="Q9ZPE9">
    <property type="glycosylation" value="1 site, No reported glycans"/>
</dbReference>
<dbReference type="GlyGen" id="Q9ZPE9">
    <property type="glycosylation" value="1 site"/>
</dbReference>
<dbReference type="iPTMnet" id="Q9ZPE9"/>
<dbReference type="PaxDb" id="3702-AT4G08930.1"/>
<dbReference type="ProteomicsDB" id="244962"/>
<dbReference type="EnsemblPlants" id="AT4G08930.1">
    <property type="protein sequence ID" value="AT4G08930.1"/>
    <property type="gene ID" value="AT4G08930"/>
</dbReference>
<dbReference type="GeneID" id="826471"/>
<dbReference type="Gramene" id="AT4G08930.1">
    <property type="protein sequence ID" value="AT4G08930.1"/>
    <property type="gene ID" value="AT4G08930"/>
</dbReference>
<dbReference type="KEGG" id="ath:AT4G08930"/>
<dbReference type="Araport" id="AT4G08930"/>
<dbReference type="TAIR" id="AT4G08930">
    <property type="gene designation" value="APRL6"/>
</dbReference>
<dbReference type="eggNOG" id="KOG2640">
    <property type="taxonomic scope" value="Eukaryota"/>
</dbReference>
<dbReference type="HOGENOM" id="CLU_051582_0_0_1"/>
<dbReference type="InParanoid" id="Q9ZPE9"/>
<dbReference type="OMA" id="CPRESAK"/>
<dbReference type="PhylomeDB" id="Q9ZPE9"/>
<dbReference type="PRO" id="PR:Q9ZPE9"/>
<dbReference type="Proteomes" id="UP000006548">
    <property type="component" value="Chromosome 4"/>
</dbReference>
<dbReference type="ExpressionAtlas" id="Q9ZPE9">
    <property type="expression patterns" value="baseline and differential"/>
</dbReference>
<dbReference type="GO" id="GO:0016020">
    <property type="term" value="C:membrane"/>
    <property type="evidence" value="ECO:0007669"/>
    <property type="project" value="UniProtKB-SubCell"/>
</dbReference>
<dbReference type="CDD" id="cd02999">
    <property type="entry name" value="PDI_a_ERp44_like"/>
    <property type="match status" value="1"/>
</dbReference>
<dbReference type="Gene3D" id="3.40.30.10">
    <property type="entry name" value="Glutaredoxin"/>
    <property type="match status" value="1"/>
</dbReference>
<dbReference type="InterPro" id="IPR044606">
    <property type="entry name" value="APRL4/6"/>
</dbReference>
<dbReference type="InterPro" id="IPR036249">
    <property type="entry name" value="Thioredoxin-like_sf"/>
</dbReference>
<dbReference type="InterPro" id="IPR013766">
    <property type="entry name" value="Thioredoxin_domain"/>
</dbReference>
<dbReference type="PANTHER" id="PTHR46854">
    <property type="entry name" value="5'-ADENYLYLSULFATE REDUCTASE-LIKE 4-RELATED"/>
    <property type="match status" value="1"/>
</dbReference>
<dbReference type="PANTHER" id="PTHR46854:SF1">
    <property type="entry name" value="5'-ADENYLYLSULFATE REDUCTASE-LIKE 4-RELATED"/>
    <property type="match status" value="1"/>
</dbReference>
<dbReference type="Pfam" id="PF00085">
    <property type="entry name" value="Thioredoxin"/>
    <property type="match status" value="1"/>
</dbReference>
<dbReference type="SUPFAM" id="SSF52833">
    <property type="entry name" value="Thioredoxin-like"/>
    <property type="match status" value="1"/>
</dbReference>
<reference key="1">
    <citation type="journal article" date="1999" name="Nature">
        <title>Sequence and analysis of chromosome 4 of the plant Arabidopsis thaliana.</title>
        <authorList>
            <person name="Mayer K.F.X."/>
            <person name="Schueller C."/>
            <person name="Wambutt R."/>
            <person name="Murphy G."/>
            <person name="Volckaert G."/>
            <person name="Pohl T."/>
            <person name="Duesterhoeft A."/>
            <person name="Stiekema W."/>
            <person name="Entian K.-D."/>
            <person name="Terryn N."/>
            <person name="Harris B."/>
            <person name="Ansorge W."/>
            <person name="Brandt P."/>
            <person name="Grivell L.A."/>
            <person name="Rieger M."/>
            <person name="Weichselgartner M."/>
            <person name="de Simone V."/>
            <person name="Obermaier B."/>
            <person name="Mache R."/>
            <person name="Mueller M."/>
            <person name="Kreis M."/>
            <person name="Delseny M."/>
            <person name="Puigdomenech P."/>
            <person name="Watson M."/>
            <person name="Schmidtheini T."/>
            <person name="Reichert B."/>
            <person name="Portetelle D."/>
            <person name="Perez-Alonso M."/>
            <person name="Boutry M."/>
            <person name="Bancroft I."/>
            <person name="Vos P."/>
            <person name="Hoheisel J."/>
            <person name="Zimmermann W."/>
            <person name="Wedler H."/>
            <person name="Ridley P."/>
            <person name="Langham S.-A."/>
            <person name="McCullagh B."/>
            <person name="Bilham L."/>
            <person name="Robben J."/>
            <person name="van der Schueren J."/>
            <person name="Grymonprez B."/>
            <person name="Chuang Y.-J."/>
            <person name="Vandenbussche F."/>
            <person name="Braeken M."/>
            <person name="Weltjens I."/>
            <person name="Voet M."/>
            <person name="Bastiaens I."/>
            <person name="Aert R."/>
            <person name="Defoor E."/>
            <person name="Weitzenegger T."/>
            <person name="Bothe G."/>
            <person name="Ramsperger U."/>
            <person name="Hilbert H."/>
            <person name="Braun M."/>
            <person name="Holzer E."/>
            <person name="Brandt A."/>
            <person name="Peters S."/>
            <person name="van Staveren M."/>
            <person name="Dirkse W."/>
            <person name="Mooijman P."/>
            <person name="Klein Lankhorst R."/>
            <person name="Rose M."/>
            <person name="Hauf J."/>
            <person name="Koetter P."/>
            <person name="Berneiser S."/>
            <person name="Hempel S."/>
            <person name="Feldpausch M."/>
            <person name="Lamberth S."/>
            <person name="Van den Daele H."/>
            <person name="De Keyser A."/>
            <person name="Buysshaert C."/>
            <person name="Gielen J."/>
            <person name="Villarroel R."/>
            <person name="De Clercq R."/>
            <person name="van Montagu M."/>
            <person name="Rogers J."/>
            <person name="Cronin A."/>
            <person name="Quail M.A."/>
            <person name="Bray-Allen S."/>
            <person name="Clark L."/>
            <person name="Doggett J."/>
            <person name="Hall S."/>
            <person name="Kay M."/>
            <person name="Lennard N."/>
            <person name="McLay K."/>
            <person name="Mayes R."/>
            <person name="Pettett A."/>
            <person name="Rajandream M.A."/>
            <person name="Lyne M."/>
            <person name="Benes V."/>
            <person name="Rechmann S."/>
            <person name="Borkova D."/>
            <person name="Bloecker H."/>
            <person name="Scharfe M."/>
            <person name="Grimm M."/>
            <person name="Loehnert T.-H."/>
            <person name="Dose S."/>
            <person name="de Haan M."/>
            <person name="Maarse A.C."/>
            <person name="Schaefer M."/>
            <person name="Mueller-Auer S."/>
            <person name="Gabel C."/>
            <person name="Fuchs M."/>
            <person name="Fartmann B."/>
            <person name="Granderath K."/>
            <person name="Dauner D."/>
            <person name="Herzl A."/>
            <person name="Neumann S."/>
            <person name="Argiriou A."/>
            <person name="Vitale D."/>
            <person name="Liguori R."/>
            <person name="Piravandi E."/>
            <person name="Massenet O."/>
            <person name="Quigley F."/>
            <person name="Clabauld G."/>
            <person name="Muendlein A."/>
            <person name="Felber R."/>
            <person name="Schnabl S."/>
            <person name="Hiller R."/>
            <person name="Schmidt W."/>
            <person name="Lecharny A."/>
            <person name="Aubourg S."/>
            <person name="Chefdor F."/>
            <person name="Cooke R."/>
            <person name="Berger C."/>
            <person name="Monfort A."/>
            <person name="Casacuberta E."/>
            <person name="Gibbons T."/>
            <person name="Weber N."/>
            <person name="Vandenbol M."/>
            <person name="Bargues M."/>
            <person name="Terol J."/>
            <person name="Torres A."/>
            <person name="Perez-Perez A."/>
            <person name="Purnelle B."/>
            <person name="Bent E."/>
            <person name="Johnson S."/>
            <person name="Tacon D."/>
            <person name="Jesse T."/>
            <person name="Heijnen L."/>
            <person name="Schwarz S."/>
            <person name="Scholler P."/>
            <person name="Heber S."/>
            <person name="Francs P."/>
            <person name="Bielke C."/>
            <person name="Frishman D."/>
            <person name="Haase D."/>
            <person name="Lemcke K."/>
            <person name="Mewes H.-W."/>
            <person name="Stocker S."/>
            <person name="Zaccaria P."/>
            <person name="Bevan M."/>
            <person name="Wilson R.K."/>
            <person name="de la Bastide M."/>
            <person name="Habermann K."/>
            <person name="Parnell L."/>
            <person name="Dedhia N."/>
            <person name="Gnoj L."/>
            <person name="Schutz K."/>
            <person name="Huang E."/>
            <person name="Spiegel L."/>
            <person name="Sekhon M."/>
            <person name="Murray J."/>
            <person name="Sheet P."/>
            <person name="Cordes M."/>
            <person name="Abu-Threideh J."/>
            <person name="Stoneking T."/>
            <person name="Kalicki J."/>
            <person name="Graves T."/>
            <person name="Harmon G."/>
            <person name="Edwards J."/>
            <person name="Latreille P."/>
            <person name="Courtney L."/>
            <person name="Cloud J."/>
            <person name="Abbott A."/>
            <person name="Scott K."/>
            <person name="Johnson D."/>
            <person name="Minx P."/>
            <person name="Bentley D."/>
            <person name="Fulton B."/>
            <person name="Miller N."/>
            <person name="Greco T."/>
            <person name="Kemp K."/>
            <person name="Kramer J."/>
            <person name="Fulton L."/>
            <person name="Mardis E."/>
            <person name="Dante M."/>
            <person name="Pepin K."/>
            <person name="Hillier L.W."/>
            <person name="Nelson J."/>
            <person name="Spieth J."/>
            <person name="Ryan E."/>
            <person name="Andrews S."/>
            <person name="Geisel C."/>
            <person name="Layman D."/>
            <person name="Du H."/>
            <person name="Ali J."/>
            <person name="Berghoff A."/>
            <person name="Jones K."/>
            <person name="Drone K."/>
            <person name="Cotton M."/>
            <person name="Joshu C."/>
            <person name="Antonoiu B."/>
            <person name="Zidanic M."/>
            <person name="Strong C."/>
            <person name="Sun H."/>
            <person name="Lamar B."/>
            <person name="Yordan C."/>
            <person name="Ma P."/>
            <person name="Zhong J."/>
            <person name="Preston R."/>
            <person name="Vil D."/>
            <person name="Shekher M."/>
            <person name="Matero A."/>
            <person name="Shah R."/>
            <person name="Swaby I.K."/>
            <person name="O'Shaughnessy A."/>
            <person name="Rodriguez M."/>
            <person name="Hoffman J."/>
            <person name="Till S."/>
            <person name="Granat S."/>
            <person name="Shohdy N."/>
            <person name="Hasegawa A."/>
            <person name="Hameed A."/>
            <person name="Lodhi M."/>
            <person name="Johnson A."/>
            <person name="Chen E."/>
            <person name="Marra M.A."/>
            <person name="Martienssen R."/>
            <person name="McCombie W.R."/>
        </authorList>
    </citation>
    <scope>NUCLEOTIDE SEQUENCE [LARGE SCALE GENOMIC DNA]</scope>
    <source>
        <strain>cv. Columbia</strain>
    </source>
</reference>
<reference key="2">
    <citation type="journal article" date="2017" name="Plant J.">
        <title>Araport11: a complete reannotation of the Arabidopsis thaliana reference genome.</title>
        <authorList>
            <person name="Cheng C.Y."/>
            <person name="Krishnakumar V."/>
            <person name="Chan A.P."/>
            <person name="Thibaud-Nissen F."/>
            <person name="Schobel S."/>
            <person name="Town C.D."/>
        </authorList>
    </citation>
    <scope>GENOME REANNOTATION</scope>
    <source>
        <strain>cv. Columbia</strain>
    </source>
</reference>
<reference key="3">
    <citation type="journal article" date="2004" name="Genome Res.">
        <title>Whole genome sequence comparisons and 'full-length' cDNA sequences: a combined approach to evaluate and improve Arabidopsis genome annotation.</title>
        <authorList>
            <person name="Castelli V."/>
            <person name="Aury J.-M."/>
            <person name="Jaillon O."/>
            <person name="Wincker P."/>
            <person name="Clepet C."/>
            <person name="Menard M."/>
            <person name="Cruaud C."/>
            <person name="Quetier F."/>
            <person name="Scarpelli C."/>
            <person name="Schaechter V."/>
            <person name="Temple G."/>
            <person name="Caboche M."/>
            <person name="Weissenbach J."/>
            <person name="Salanoubat M."/>
        </authorList>
    </citation>
    <scope>NUCLEOTIDE SEQUENCE [LARGE SCALE MRNA]</scope>
    <source>
        <strain>cv. Columbia</strain>
    </source>
</reference>
<reference key="4">
    <citation type="submission" date="2006-07" db="EMBL/GenBank/DDBJ databases">
        <title>Large-scale analysis of RIKEN Arabidopsis full-length (RAFL) cDNAs.</title>
        <authorList>
            <person name="Totoki Y."/>
            <person name="Seki M."/>
            <person name="Ishida J."/>
            <person name="Nakajima M."/>
            <person name="Enju A."/>
            <person name="Kamiya A."/>
            <person name="Narusaka M."/>
            <person name="Shin-i T."/>
            <person name="Nakagawa M."/>
            <person name="Sakamoto N."/>
            <person name="Oishi K."/>
            <person name="Kohara Y."/>
            <person name="Kobayashi M."/>
            <person name="Toyoda A."/>
            <person name="Sakaki Y."/>
            <person name="Sakurai T."/>
            <person name="Iida K."/>
            <person name="Akiyama K."/>
            <person name="Satou M."/>
            <person name="Toyoda T."/>
            <person name="Konagaya A."/>
            <person name="Carninci P."/>
            <person name="Kawai J."/>
            <person name="Hayashizaki Y."/>
            <person name="Shinozaki K."/>
        </authorList>
    </citation>
    <scope>NUCLEOTIDE SEQUENCE [LARGE SCALE MRNA]</scope>
    <source>
        <strain>cv. Columbia</strain>
    </source>
</reference>
<evidence type="ECO:0000255" key="1"/>
<evidence type="ECO:0000305" key="2"/>
<keyword id="KW-0325">Glycoprotein</keyword>
<keyword id="KW-0472">Membrane</keyword>
<keyword id="KW-1185">Reference proteome</keyword>
<keyword id="KW-0732">Signal</keyword>
<keyword id="KW-0812">Transmembrane</keyword>
<keyword id="KW-1133">Transmembrane helix</keyword>
<protein>
    <recommendedName>
        <fullName>5'-adenylylsulfate reductase-like 6</fullName>
    </recommendedName>
    <alternativeName>
        <fullName>Adenosine 5'-phosphosulfate reductase-like 6</fullName>
        <shortName>APR-like 6</shortName>
        <shortName>AtAPRL6</shortName>
    </alternativeName>
</protein>
<proteinExistence type="evidence at transcript level"/>
<feature type="signal peptide" evidence="1">
    <location>
        <begin position="1"/>
        <end position="22"/>
    </location>
</feature>
<feature type="chain" id="PRO_0000400043" description="5'-adenylylsulfate reductase-like 6">
    <location>
        <begin position="23"/>
        <end position="295"/>
    </location>
</feature>
<feature type="transmembrane region" description="Helical" evidence="1">
    <location>
        <begin position="208"/>
        <end position="228"/>
    </location>
</feature>
<feature type="domain" description="Thioredoxin">
    <location>
        <begin position="23"/>
        <end position="161"/>
    </location>
</feature>
<feature type="glycosylation site" description="N-linked (GlcNAc...) asparagine" evidence="1">
    <location>
        <position position="136"/>
    </location>
</feature>
<accession>Q9ZPE9</accession>
<accession>Q0WT33</accession>
<gene>
    <name type="primary">APRL6</name>
    <name type="ordered locus">At4g08930</name>
    <name type="ORF">T3H13.4</name>
</gene>
<comment type="subcellular location">
    <subcellularLocation>
        <location evidence="2">Membrane</location>
        <topology evidence="2">Single-pass membrane protein</topology>
    </subcellularLocation>
</comment>
<comment type="sequence caution" evidence="2">
    <conflict type="erroneous gene model prediction">
        <sequence resource="EMBL-CDS" id="AAD17368"/>
    </conflict>
</comment>
<comment type="sequence caution" evidence="2">
    <conflict type="miscellaneous discrepancy">
        <sequence resource="EMBL-CDS" id="BAE99715"/>
    </conflict>
    <text>Intron retention.</text>
</comment>
<comment type="sequence caution" evidence="2">
    <conflict type="erroneous gene model prediction">
        <sequence resource="EMBL-CDS" id="CAB78017"/>
    </conflict>
</comment>
<name>APRL6_ARATH</name>
<sequence>MEKKLTLLLLVVVVLFVNLTNATVRVQICPRESAKDYILGFRDKSALHRPGFVTEGDDRWLQMAADMVDKKNKCDYAALLFYASWCPFSRLVRPSFDLMSLLYSSVPHFAIEESSVKASTLSKYGVHGFPTIILMNSTMLVVYRGSRTLDSLVAFYTDVTGIETMDERWVERNRLVPHFHAEPENCPFPWARRSPENLLRQETYLTLATVFVLLRLLHLISPTMVVFVKFTWGRVSNMRLGNPLEHTVTMYLKEPCMSSNLQEGAMNARAWASKSLATVSIAESSSSSRSVSASQ</sequence>